<reference key="1">
    <citation type="journal article" date="2004" name="Science">
        <title>A predator unmasked: life cycle of Bdellovibrio bacteriovorus from a genomic perspective.</title>
        <authorList>
            <person name="Rendulic S."/>
            <person name="Jagtap P."/>
            <person name="Rosinus A."/>
            <person name="Eppinger M."/>
            <person name="Baar C."/>
            <person name="Lanz C."/>
            <person name="Keller H."/>
            <person name="Lambert C."/>
            <person name="Evans K.J."/>
            <person name="Goesmann A."/>
            <person name="Meyer F."/>
            <person name="Sockett R.E."/>
            <person name="Schuster S.C."/>
        </authorList>
    </citation>
    <scope>NUCLEOTIDE SEQUENCE [LARGE SCALE GENOMIC DNA]</scope>
    <source>
        <strain>ATCC 15356 / DSM 50701 / NCIMB 9529 / HD100</strain>
    </source>
</reference>
<feature type="chain" id="PRO_0000179505" description="ATP-dependent Clp protease proteolytic subunit">
    <location>
        <begin position="1"/>
        <end position="212"/>
    </location>
</feature>
<feature type="active site" description="Nucleophile" evidence="1">
    <location>
        <position position="109"/>
    </location>
</feature>
<feature type="active site" evidence="1">
    <location>
        <position position="134"/>
    </location>
</feature>
<organism>
    <name type="scientific">Bdellovibrio bacteriovorus (strain ATCC 15356 / DSM 50701 / NCIMB 9529 / HD100)</name>
    <dbReference type="NCBI Taxonomy" id="264462"/>
    <lineage>
        <taxon>Bacteria</taxon>
        <taxon>Pseudomonadati</taxon>
        <taxon>Bdellovibrionota</taxon>
        <taxon>Bdellovibrionia</taxon>
        <taxon>Bdellovibrionales</taxon>
        <taxon>Pseudobdellovibrionaceae</taxon>
        <taxon>Bdellovibrio</taxon>
    </lineage>
</organism>
<gene>
    <name evidence="1" type="primary">clpP</name>
    <name type="ordered locus">Bd3754</name>
</gene>
<evidence type="ECO:0000255" key="1">
    <source>
        <dbReference type="HAMAP-Rule" id="MF_00444"/>
    </source>
</evidence>
<keyword id="KW-0963">Cytoplasm</keyword>
<keyword id="KW-0378">Hydrolase</keyword>
<keyword id="KW-0645">Protease</keyword>
<keyword id="KW-1185">Reference proteome</keyword>
<keyword id="KW-0720">Serine protease</keyword>
<sequence length="212" mass="23524">MTPQSQPQETAVALIPYVIEQTSKGERSYDIYSRLLKDRIIILGTAVTDEVANSIIAQMLFLEVDNPEKPIHLYINSPGGSVSAGLAIYDFMQFVKCDVATYCMGMAASMGSLLLTAGTKGMRYSLPNTRIMIHQPLLSGGGLSGQVTDIEIHAKELVKTKEKLTRIYETHTGRDYDTLRAAMERDNFMDPYQAKEFGLLDHVVESRKAKKG</sequence>
<name>CLPP_BDEBA</name>
<accession>Q6MH11</accession>
<protein>
    <recommendedName>
        <fullName evidence="1">ATP-dependent Clp protease proteolytic subunit</fullName>
        <ecNumber evidence="1">3.4.21.92</ecNumber>
    </recommendedName>
    <alternativeName>
        <fullName evidence="1">Endopeptidase Clp</fullName>
    </alternativeName>
</protein>
<dbReference type="EC" id="3.4.21.92" evidence="1"/>
<dbReference type="EMBL" id="BX842656">
    <property type="protein sequence ID" value="CAE81116.1"/>
    <property type="molecule type" value="Genomic_DNA"/>
</dbReference>
<dbReference type="RefSeq" id="WP_011166059.1">
    <property type="nucleotide sequence ID" value="NC_005363.1"/>
</dbReference>
<dbReference type="SMR" id="Q6MH11"/>
<dbReference type="STRING" id="264462.Bd3754"/>
<dbReference type="MEROPS" id="S14.001"/>
<dbReference type="GeneID" id="93014532"/>
<dbReference type="KEGG" id="bba:Bd3754"/>
<dbReference type="eggNOG" id="COG0740">
    <property type="taxonomic scope" value="Bacteria"/>
</dbReference>
<dbReference type="HOGENOM" id="CLU_058707_3_2_7"/>
<dbReference type="Proteomes" id="UP000008080">
    <property type="component" value="Chromosome"/>
</dbReference>
<dbReference type="GO" id="GO:0005737">
    <property type="term" value="C:cytoplasm"/>
    <property type="evidence" value="ECO:0007669"/>
    <property type="project" value="UniProtKB-SubCell"/>
</dbReference>
<dbReference type="GO" id="GO:0009368">
    <property type="term" value="C:endopeptidase Clp complex"/>
    <property type="evidence" value="ECO:0007669"/>
    <property type="project" value="TreeGrafter"/>
</dbReference>
<dbReference type="GO" id="GO:0004176">
    <property type="term" value="F:ATP-dependent peptidase activity"/>
    <property type="evidence" value="ECO:0007669"/>
    <property type="project" value="InterPro"/>
</dbReference>
<dbReference type="GO" id="GO:0051117">
    <property type="term" value="F:ATPase binding"/>
    <property type="evidence" value="ECO:0007669"/>
    <property type="project" value="TreeGrafter"/>
</dbReference>
<dbReference type="GO" id="GO:0004252">
    <property type="term" value="F:serine-type endopeptidase activity"/>
    <property type="evidence" value="ECO:0007669"/>
    <property type="project" value="UniProtKB-UniRule"/>
</dbReference>
<dbReference type="GO" id="GO:0006515">
    <property type="term" value="P:protein quality control for misfolded or incompletely synthesized proteins"/>
    <property type="evidence" value="ECO:0007669"/>
    <property type="project" value="TreeGrafter"/>
</dbReference>
<dbReference type="CDD" id="cd07017">
    <property type="entry name" value="S14_ClpP_2"/>
    <property type="match status" value="1"/>
</dbReference>
<dbReference type="FunFam" id="3.90.226.10:FF:000001">
    <property type="entry name" value="ATP-dependent Clp protease proteolytic subunit"/>
    <property type="match status" value="1"/>
</dbReference>
<dbReference type="Gene3D" id="3.90.226.10">
    <property type="entry name" value="2-enoyl-CoA Hydratase, Chain A, domain 1"/>
    <property type="match status" value="1"/>
</dbReference>
<dbReference type="HAMAP" id="MF_00444">
    <property type="entry name" value="ClpP"/>
    <property type="match status" value="1"/>
</dbReference>
<dbReference type="InterPro" id="IPR001907">
    <property type="entry name" value="ClpP"/>
</dbReference>
<dbReference type="InterPro" id="IPR029045">
    <property type="entry name" value="ClpP/crotonase-like_dom_sf"/>
</dbReference>
<dbReference type="InterPro" id="IPR023562">
    <property type="entry name" value="ClpP/TepA"/>
</dbReference>
<dbReference type="InterPro" id="IPR033135">
    <property type="entry name" value="ClpP_His_AS"/>
</dbReference>
<dbReference type="InterPro" id="IPR018215">
    <property type="entry name" value="ClpP_Ser_AS"/>
</dbReference>
<dbReference type="NCBIfam" id="NF001368">
    <property type="entry name" value="PRK00277.1"/>
    <property type="match status" value="1"/>
</dbReference>
<dbReference type="NCBIfam" id="NF009205">
    <property type="entry name" value="PRK12553.1"/>
    <property type="match status" value="1"/>
</dbReference>
<dbReference type="PANTHER" id="PTHR10381">
    <property type="entry name" value="ATP-DEPENDENT CLP PROTEASE PROTEOLYTIC SUBUNIT"/>
    <property type="match status" value="1"/>
</dbReference>
<dbReference type="PANTHER" id="PTHR10381:SF11">
    <property type="entry name" value="ATP-DEPENDENT CLP PROTEASE PROTEOLYTIC SUBUNIT, MITOCHONDRIAL"/>
    <property type="match status" value="1"/>
</dbReference>
<dbReference type="Pfam" id="PF00574">
    <property type="entry name" value="CLP_protease"/>
    <property type="match status" value="1"/>
</dbReference>
<dbReference type="PRINTS" id="PR00127">
    <property type="entry name" value="CLPPROTEASEP"/>
</dbReference>
<dbReference type="SUPFAM" id="SSF52096">
    <property type="entry name" value="ClpP/crotonase"/>
    <property type="match status" value="1"/>
</dbReference>
<dbReference type="PROSITE" id="PS00382">
    <property type="entry name" value="CLP_PROTEASE_HIS"/>
    <property type="match status" value="1"/>
</dbReference>
<dbReference type="PROSITE" id="PS00381">
    <property type="entry name" value="CLP_PROTEASE_SER"/>
    <property type="match status" value="1"/>
</dbReference>
<proteinExistence type="inferred from homology"/>
<comment type="function">
    <text evidence="1">Cleaves peptides in various proteins in a process that requires ATP hydrolysis. Has a chymotrypsin-like activity. Plays a major role in the degradation of misfolded proteins.</text>
</comment>
<comment type="catalytic activity">
    <reaction evidence="1">
        <text>Hydrolysis of proteins to small peptides in the presence of ATP and magnesium. alpha-casein is the usual test substrate. In the absence of ATP, only oligopeptides shorter than five residues are hydrolyzed (such as succinyl-Leu-Tyr-|-NHMec, and Leu-Tyr-Leu-|-Tyr-Trp, in which cleavage of the -Tyr-|-Leu- and -Tyr-|-Trp bonds also occurs).</text>
        <dbReference type="EC" id="3.4.21.92"/>
    </reaction>
</comment>
<comment type="subunit">
    <text evidence="1">Fourteen ClpP subunits assemble into 2 heptameric rings which stack back to back to give a disk-like structure with a central cavity, resembling the structure of eukaryotic proteasomes.</text>
</comment>
<comment type="subcellular location">
    <subcellularLocation>
        <location evidence="1">Cytoplasm</location>
    </subcellularLocation>
</comment>
<comment type="similarity">
    <text evidence="1">Belongs to the peptidase S14 family.</text>
</comment>